<proteinExistence type="inferred from homology"/>
<sequence length="248" mass="26919">MRQVIIAGNWKMNASKEATNILVMDILSGMVDVKSKVIICVPFPYMAQVEALVGCSQLNLGAQDLNINKSGAFTGEVSVDMIKDFGARYVIVGHSERRSLYFENNEIVAQKVQVALNNNLTPLLCIGELLEDRDSGKTQEVVSEQIQAVIDLVGIDAFKDIIVAYEPVWAIGTGITATPQQAQDTHAFIRSMLAKYDDNVSQITSILYGGSMNPRNAAELMNCKDIDGGLIGGASLKAQDFLQICKAS</sequence>
<name>TPIS_VESOH</name>
<gene>
    <name evidence="1" type="primary">tpiA</name>
    <name type="ordered locus">COSY_0977</name>
</gene>
<protein>
    <recommendedName>
        <fullName evidence="1">Triosephosphate isomerase</fullName>
        <shortName evidence="1">TIM</shortName>
        <shortName evidence="1">TPI</shortName>
        <ecNumber evidence="1">5.3.1.1</ecNumber>
    </recommendedName>
    <alternativeName>
        <fullName evidence="1">Triose-phosphate isomerase</fullName>
    </alternativeName>
</protein>
<organism>
    <name type="scientific">Vesicomyosocius okutanii subsp. Calyptogena okutanii (strain HA)</name>
    <dbReference type="NCBI Taxonomy" id="412965"/>
    <lineage>
        <taxon>Bacteria</taxon>
        <taxon>Pseudomonadati</taxon>
        <taxon>Pseudomonadota</taxon>
        <taxon>Gammaproteobacteria</taxon>
        <taxon>Candidatus Pseudothioglobaceae</taxon>
        <taxon>Candidatus Vesicomyosocius</taxon>
    </lineage>
</organism>
<accession>A5CVF7</accession>
<dbReference type="EC" id="5.3.1.1" evidence="1"/>
<dbReference type="EMBL" id="AP009247">
    <property type="protein sequence ID" value="BAF62075.1"/>
    <property type="molecule type" value="Genomic_DNA"/>
</dbReference>
<dbReference type="RefSeq" id="WP_011930344.1">
    <property type="nucleotide sequence ID" value="NC_009465.1"/>
</dbReference>
<dbReference type="SMR" id="A5CVF7"/>
<dbReference type="STRING" id="412965.COSY_0977"/>
<dbReference type="KEGG" id="vok:COSY_0977"/>
<dbReference type="eggNOG" id="COG0149">
    <property type="taxonomic scope" value="Bacteria"/>
</dbReference>
<dbReference type="HOGENOM" id="CLU_024251_2_1_6"/>
<dbReference type="OrthoDB" id="9809429at2"/>
<dbReference type="UniPathway" id="UPA00109">
    <property type="reaction ID" value="UER00189"/>
</dbReference>
<dbReference type="UniPathway" id="UPA00138"/>
<dbReference type="Proteomes" id="UP000000247">
    <property type="component" value="Chromosome"/>
</dbReference>
<dbReference type="GO" id="GO:0005829">
    <property type="term" value="C:cytosol"/>
    <property type="evidence" value="ECO:0007669"/>
    <property type="project" value="TreeGrafter"/>
</dbReference>
<dbReference type="GO" id="GO:0004807">
    <property type="term" value="F:triose-phosphate isomerase activity"/>
    <property type="evidence" value="ECO:0007669"/>
    <property type="project" value="UniProtKB-UniRule"/>
</dbReference>
<dbReference type="GO" id="GO:0006094">
    <property type="term" value="P:gluconeogenesis"/>
    <property type="evidence" value="ECO:0007669"/>
    <property type="project" value="UniProtKB-UniRule"/>
</dbReference>
<dbReference type="GO" id="GO:0046166">
    <property type="term" value="P:glyceraldehyde-3-phosphate biosynthetic process"/>
    <property type="evidence" value="ECO:0007669"/>
    <property type="project" value="TreeGrafter"/>
</dbReference>
<dbReference type="GO" id="GO:0019563">
    <property type="term" value="P:glycerol catabolic process"/>
    <property type="evidence" value="ECO:0007669"/>
    <property type="project" value="TreeGrafter"/>
</dbReference>
<dbReference type="GO" id="GO:0006096">
    <property type="term" value="P:glycolytic process"/>
    <property type="evidence" value="ECO:0007669"/>
    <property type="project" value="UniProtKB-UniRule"/>
</dbReference>
<dbReference type="CDD" id="cd00311">
    <property type="entry name" value="TIM"/>
    <property type="match status" value="1"/>
</dbReference>
<dbReference type="FunFam" id="3.20.20.70:FF:000020">
    <property type="entry name" value="Triosephosphate isomerase"/>
    <property type="match status" value="1"/>
</dbReference>
<dbReference type="Gene3D" id="3.20.20.70">
    <property type="entry name" value="Aldolase class I"/>
    <property type="match status" value="1"/>
</dbReference>
<dbReference type="HAMAP" id="MF_00147_B">
    <property type="entry name" value="TIM_B"/>
    <property type="match status" value="1"/>
</dbReference>
<dbReference type="InterPro" id="IPR013785">
    <property type="entry name" value="Aldolase_TIM"/>
</dbReference>
<dbReference type="InterPro" id="IPR035990">
    <property type="entry name" value="TIM_sf"/>
</dbReference>
<dbReference type="InterPro" id="IPR022896">
    <property type="entry name" value="TrioseP_Isoase_bac/euk"/>
</dbReference>
<dbReference type="InterPro" id="IPR000652">
    <property type="entry name" value="Triosephosphate_isomerase"/>
</dbReference>
<dbReference type="InterPro" id="IPR020861">
    <property type="entry name" value="Triosephosphate_isomerase_AS"/>
</dbReference>
<dbReference type="NCBIfam" id="TIGR00419">
    <property type="entry name" value="tim"/>
    <property type="match status" value="1"/>
</dbReference>
<dbReference type="PANTHER" id="PTHR21139">
    <property type="entry name" value="TRIOSEPHOSPHATE ISOMERASE"/>
    <property type="match status" value="1"/>
</dbReference>
<dbReference type="PANTHER" id="PTHR21139:SF42">
    <property type="entry name" value="TRIOSEPHOSPHATE ISOMERASE"/>
    <property type="match status" value="1"/>
</dbReference>
<dbReference type="Pfam" id="PF00121">
    <property type="entry name" value="TIM"/>
    <property type="match status" value="1"/>
</dbReference>
<dbReference type="SUPFAM" id="SSF51351">
    <property type="entry name" value="Triosephosphate isomerase (TIM)"/>
    <property type="match status" value="1"/>
</dbReference>
<dbReference type="PROSITE" id="PS00171">
    <property type="entry name" value="TIM_1"/>
    <property type="match status" value="1"/>
</dbReference>
<dbReference type="PROSITE" id="PS51440">
    <property type="entry name" value="TIM_2"/>
    <property type="match status" value="1"/>
</dbReference>
<feature type="chain" id="PRO_0000307595" description="Triosephosphate isomerase">
    <location>
        <begin position="1"/>
        <end position="248"/>
    </location>
</feature>
<feature type="active site" description="Electrophile" evidence="1">
    <location>
        <position position="94"/>
    </location>
</feature>
<feature type="active site" description="Proton acceptor" evidence="1">
    <location>
        <position position="166"/>
    </location>
</feature>
<feature type="binding site" evidence="1">
    <location>
        <begin position="9"/>
        <end position="11"/>
    </location>
    <ligand>
        <name>substrate</name>
    </ligand>
</feature>
<feature type="binding site" evidence="1">
    <location>
        <position position="172"/>
    </location>
    <ligand>
        <name>substrate</name>
    </ligand>
</feature>
<feature type="binding site" evidence="1">
    <location>
        <position position="211"/>
    </location>
    <ligand>
        <name>substrate</name>
    </ligand>
</feature>
<feature type="binding site" evidence="1">
    <location>
        <begin position="232"/>
        <end position="233"/>
    </location>
    <ligand>
        <name>substrate</name>
    </ligand>
</feature>
<evidence type="ECO:0000255" key="1">
    <source>
        <dbReference type="HAMAP-Rule" id="MF_00147"/>
    </source>
</evidence>
<keyword id="KW-0963">Cytoplasm</keyword>
<keyword id="KW-0312">Gluconeogenesis</keyword>
<keyword id="KW-0324">Glycolysis</keyword>
<keyword id="KW-0413">Isomerase</keyword>
<keyword id="KW-1185">Reference proteome</keyword>
<reference key="1">
    <citation type="journal article" date="2007" name="Curr. Biol.">
        <title>Reduced genome of the thioautotrophic intracellular symbiont in a deep-sea clam, Calyptogena okutanii.</title>
        <authorList>
            <person name="Kuwahara H."/>
            <person name="Yoshida T."/>
            <person name="Takaki Y."/>
            <person name="Shimamura S."/>
            <person name="Nishi S."/>
            <person name="Harada M."/>
            <person name="Matsuyama K."/>
            <person name="Takishita K."/>
            <person name="Kawato M."/>
            <person name="Uematsu K."/>
            <person name="Fujiwara Y."/>
            <person name="Sato T."/>
            <person name="Kato C."/>
            <person name="Kitagawa M."/>
            <person name="Kato I."/>
            <person name="Maruyama T."/>
        </authorList>
    </citation>
    <scope>NUCLEOTIDE SEQUENCE [LARGE SCALE GENOMIC DNA]</scope>
    <source>
        <strain>HA</strain>
    </source>
</reference>
<comment type="function">
    <text evidence="1">Involved in the gluconeogenesis. Catalyzes stereospecifically the conversion of dihydroxyacetone phosphate (DHAP) to D-glyceraldehyde-3-phosphate (G3P).</text>
</comment>
<comment type="catalytic activity">
    <reaction evidence="1">
        <text>D-glyceraldehyde 3-phosphate = dihydroxyacetone phosphate</text>
        <dbReference type="Rhea" id="RHEA:18585"/>
        <dbReference type="ChEBI" id="CHEBI:57642"/>
        <dbReference type="ChEBI" id="CHEBI:59776"/>
        <dbReference type="EC" id="5.3.1.1"/>
    </reaction>
</comment>
<comment type="pathway">
    <text evidence="1">Carbohydrate biosynthesis; gluconeogenesis.</text>
</comment>
<comment type="pathway">
    <text evidence="1">Carbohydrate degradation; glycolysis; D-glyceraldehyde 3-phosphate from glycerone phosphate: step 1/1.</text>
</comment>
<comment type="subunit">
    <text evidence="1">Homodimer.</text>
</comment>
<comment type="subcellular location">
    <subcellularLocation>
        <location evidence="1">Cytoplasm</location>
    </subcellularLocation>
</comment>
<comment type="similarity">
    <text evidence="1">Belongs to the triosephosphate isomerase family.</text>
</comment>